<accession>P39998</accession>
<accession>D3DLN5</accession>
<reference key="1">
    <citation type="journal article" date="1997" name="Nature">
        <title>The nucleotide sequence of Saccharomyces cerevisiae chromosome V.</title>
        <authorList>
            <person name="Dietrich F.S."/>
            <person name="Mulligan J.T."/>
            <person name="Hennessy K.M."/>
            <person name="Yelton M.A."/>
            <person name="Allen E."/>
            <person name="Araujo R."/>
            <person name="Aviles E."/>
            <person name="Berno A."/>
            <person name="Brennan T."/>
            <person name="Carpenter J."/>
            <person name="Chen E."/>
            <person name="Cherry J.M."/>
            <person name="Chung E."/>
            <person name="Duncan M."/>
            <person name="Guzman E."/>
            <person name="Hartzell G."/>
            <person name="Hunicke-Smith S."/>
            <person name="Hyman R.W."/>
            <person name="Kayser A."/>
            <person name="Komp C."/>
            <person name="Lashkari D."/>
            <person name="Lew H."/>
            <person name="Lin D."/>
            <person name="Mosedale D."/>
            <person name="Nakahara K."/>
            <person name="Namath A."/>
            <person name="Norgren R."/>
            <person name="Oefner P."/>
            <person name="Oh C."/>
            <person name="Petel F.X."/>
            <person name="Roberts D."/>
            <person name="Sehl P."/>
            <person name="Schramm S."/>
            <person name="Shogren T."/>
            <person name="Smith V."/>
            <person name="Taylor P."/>
            <person name="Wei Y."/>
            <person name="Botstein D."/>
            <person name="Davis R.W."/>
        </authorList>
    </citation>
    <scope>NUCLEOTIDE SEQUENCE [LARGE SCALE GENOMIC DNA]</scope>
    <source>
        <strain>ATCC 204508 / S288c</strain>
    </source>
</reference>
<reference key="2">
    <citation type="journal article" date="2007" name="J. Proteome Res.">
        <title>Large-scale phosphorylation analysis of alpha-factor-arrested Saccharomyces cerevisiae.</title>
        <authorList>
            <person name="Li X."/>
            <person name="Gerber S.A."/>
            <person name="Rudner A.D."/>
            <person name="Beausoleil S.A."/>
            <person name="Haas W."/>
            <person name="Villen J."/>
            <person name="Elias J.E."/>
            <person name="Gygi S.P."/>
        </authorList>
    </citation>
    <scope>PHOSPHORYLATION [LARGE SCALE ANALYSIS] AT SER-257</scope>
    <scope>IDENTIFICATION BY MASS SPECTROMETRY [LARGE SCALE ANALYSIS]</scope>
    <source>
        <strain>ADR376</strain>
    </source>
</reference>
<reference key="3">
    <citation type="journal article" date="2007" name="Proc. Natl. Acad. Sci. U.S.A.">
        <title>Analysis of phosphorylation sites on proteins from Saccharomyces cerevisiae by electron transfer dissociation (ETD) mass spectrometry.</title>
        <authorList>
            <person name="Chi A."/>
            <person name="Huttenhower C."/>
            <person name="Geer L.Y."/>
            <person name="Coon J.J."/>
            <person name="Syka J.E.P."/>
            <person name="Bai D.L."/>
            <person name="Shabanowitz J."/>
            <person name="Burke D.J."/>
            <person name="Troyanskaya O.G."/>
            <person name="Hunt D.F."/>
        </authorList>
    </citation>
    <scope>PHOSPHORYLATION [LARGE SCALE ANALYSIS] AT SER-257</scope>
    <scope>IDENTIFICATION BY MASS SPECTROMETRY [LARGE SCALE ANALYSIS]</scope>
</reference>
<reference key="4">
    <citation type="journal article" date="2008" name="Mol. Cell. Biol.">
        <title>Crystal structure of human Edc3 and its functional implications.</title>
        <authorList>
            <person name="Ling S.H."/>
            <person name="Decker C.J."/>
            <person name="Walsh M.A."/>
            <person name="She M."/>
            <person name="Parker R."/>
            <person name="Song H."/>
        </authorList>
    </citation>
    <scope>FUNCTION</scope>
    <scope>INTERACTION WITH DCP2</scope>
    <scope>MUTAGENESIS OF 360-ARG-HIS-361</scope>
</reference>
<reference key="5">
    <citation type="journal article" date="2014" name="G3 (Bethesda)">
        <title>The reference genome sequence of Saccharomyces cerevisiae: Then and now.</title>
        <authorList>
            <person name="Engel S.R."/>
            <person name="Dietrich F.S."/>
            <person name="Fisk D.G."/>
            <person name="Binkley G."/>
            <person name="Balakrishnan R."/>
            <person name="Costanzo M.C."/>
            <person name="Dwight S.S."/>
            <person name="Hitz B.C."/>
            <person name="Karra K."/>
            <person name="Nash R.S."/>
            <person name="Weng S."/>
            <person name="Wong E.D."/>
            <person name="Lloyd P."/>
            <person name="Skrzypek M.S."/>
            <person name="Miyasato S.R."/>
            <person name="Simison M."/>
            <person name="Cherry J.M."/>
        </authorList>
    </citation>
    <scope>GENOME REANNOTATION</scope>
    <source>
        <strain>ATCC 204508 / S288c</strain>
    </source>
</reference>
<reference key="6">
    <citation type="journal article" date="2004" name="Genetics">
        <title>Identification of Edc3p as an enhancer of mRNA decapping in Saccharomyces cerevisiae.</title>
        <authorList>
            <person name="Kshirsagar M."/>
            <person name="Parker R."/>
        </authorList>
    </citation>
    <scope>FUNCTION</scope>
    <scope>SUBCELLULAR LOCATION</scope>
</reference>
<reference key="7">
    <citation type="journal article" date="2003" name="Nature">
        <title>Global analysis of protein expression in yeast.</title>
        <authorList>
            <person name="Ghaemmaghami S."/>
            <person name="Huh W.-K."/>
            <person name="Bower K."/>
            <person name="Howson R.W."/>
            <person name="Belle A."/>
            <person name="Dephoure N."/>
            <person name="O'Shea E.K."/>
            <person name="Weissman J.S."/>
        </authorList>
    </citation>
    <scope>LEVEL OF PROTEIN EXPRESSION [LARGE SCALE ANALYSIS]</scope>
</reference>
<reference key="8">
    <citation type="journal article" date="2008" name="Mol. Cell. Proteomics">
        <title>A multidimensional chromatography technology for in-depth phosphoproteome analysis.</title>
        <authorList>
            <person name="Albuquerque C.P."/>
            <person name="Smolka M.B."/>
            <person name="Payne S.H."/>
            <person name="Bafna V."/>
            <person name="Eng J."/>
            <person name="Zhou H."/>
        </authorList>
    </citation>
    <scope>IDENTIFICATION BY MASS SPECTROMETRY [LARGE SCALE ANALYSIS]</scope>
</reference>
<reference key="9">
    <citation type="journal article" date="2009" name="Science">
        <title>Global analysis of Cdk1 substrate phosphorylation sites provides insights into evolution.</title>
        <authorList>
            <person name="Holt L.J."/>
            <person name="Tuch B.B."/>
            <person name="Villen J."/>
            <person name="Johnson A.D."/>
            <person name="Gygi S.P."/>
            <person name="Morgan D.O."/>
        </authorList>
    </citation>
    <scope>PHOSPHORYLATION [LARGE SCALE ANALYSIS] AT SER-257 AND SER-261</scope>
    <scope>IDENTIFICATION BY MASS SPECTROMETRY [LARGE SCALE ANALYSIS]</scope>
</reference>
<evidence type="ECO:0000255" key="1">
    <source>
        <dbReference type="PROSITE-ProRule" id="PRU00719"/>
    </source>
</evidence>
<evidence type="ECO:0000255" key="2">
    <source>
        <dbReference type="PROSITE-ProRule" id="PRU00845"/>
    </source>
</evidence>
<evidence type="ECO:0000255" key="3">
    <source>
        <dbReference type="PROSITE-ProRule" id="PRU01346"/>
    </source>
</evidence>
<evidence type="ECO:0000256" key="4">
    <source>
        <dbReference type="SAM" id="MobiDB-lite"/>
    </source>
</evidence>
<evidence type="ECO:0000269" key="5">
    <source>
    </source>
</evidence>
<evidence type="ECO:0000269" key="6">
    <source>
    </source>
</evidence>
<evidence type="ECO:0000269" key="7">
    <source>
    </source>
</evidence>
<evidence type="ECO:0000305" key="8"/>
<evidence type="ECO:0007744" key="9">
    <source>
    </source>
</evidence>
<evidence type="ECO:0007744" key="10">
    <source>
    </source>
</evidence>
<evidence type="ECO:0007744" key="11">
    <source>
    </source>
</evidence>
<evidence type="ECO:0007829" key="12">
    <source>
        <dbReference type="PDB" id="4BRU"/>
    </source>
</evidence>
<evidence type="ECO:0007829" key="13">
    <source>
        <dbReference type="PDB" id="6Y3Z"/>
    </source>
</evidence>
<feature type="chain" id="PRO_0000202613" description="Enhancer of mRNA-decapping protein 3">
    <location>
        <begin position="1"/>
        <end position="551"/>
    </location>
</feature>
<feature type="domain" description="Sm" evidence="3">
    <location>
        <begin position="1"/>
        <end position="63"/>
    </location>
</feature>
<feature type="domain" description="DFDF" evidence="2">
    <location>
        <begin position="93"/>
        <end position="129"/>
    </location>
</feature>
<feature type="domain" description="YjeF N-terminal" evidence="1">
    <location>
        <begin position="288"/>
        <end position="527"/>
    </location>
</feature>
<feature type="region of interest" description="Disordered" evidence="4">
    <location>
        <begin position="64"/>
        <end position="92"/>
    </location>
</feature>
<feature type="modified residue" description="Phosphoserine" evidence="9 10 11">
    <location>
        <position position="257"/>
    </location>
</feature>
<feature type="modified residue" description="Phosphoserine" evidence="11">
    <location>
        <position position="261"/>
    </location>
</feature>
<feature type="mutagenesis site" description="Abolishes homodimerization." evidence="7">
    <original>RH</original>
    <variation>AA</variation>
    <location>
        <begin position="360"/>
        <end position="361"/>
    </location>
</feature>
<feature type="strand" evidence="13">
    <location>
        <begin position="8"/>
        <end position="12"/>
    </location>
</feature>
<feature type="strand" evidence="13">
    <location>
        <begin position="22"/>
        <end position="26"/>
    </location>
</feature>
<feature type="strand" evidence="13">
    <location>
        <begin position="28"/>
        <end position="38"/>
    </location>
</feature>
<feature type="strand" evidence="13">
    <location>
        <begin position="43"/>
        <end position="50"/>
    </location>
</feature>
<feature type="helix" evidence="13">
    <location>
        <begin position="51"/>
        <end position="53"/>
    </location>
</feature>
<feature type="strand" evidence="13">
    <location>
        <begin position="56"/>
        <end position="61"/>
    </location>
</feature>
<feature type="helix" evidence="12">
    <location>
        <begin position="91"/>
        <end position="94"/>
    </location>
</feature>
<feature type="turn" evidence="12">
    <location>
        <begin position="97"/>
        <end position="99"/>
    </location>
</feature>
<feature type="helix" evidence="12">
    <location>
        <begin position="107"/>
        <end position="110"/>
    </location>
</feature>
<organism>
    <name type="scientific">Saccharomyces cerevisiae (strain ATCC 204508 / S288c)</name>
    <name type="common">Baker's yeast</name>
    <dbReference type="NCBI Taxonomy" id="559292"/>
    <lineage>
        <taxon>Eukaryota</taxon>
        <taxon>Fungi</taxon>
        <taxon>Dikarya</taxon>
        <taxon>Ascomycota</taxon>
        <taxon>Saccharomycotina</taxon>
        <taxon>Saccharomycetes</taxon>
        <taxon>Saccharomycetales</taxon>
        <taxon>Saccharomycetaceae</taxon>
        <taxon>Saccharomyces</taxon>
    </lineage>
</organism>
<proteinExistence type="evidence at protein level"/>
<comment type="function">
    <text evidence="6 7">Stimulates decapping of both stable and unstable mRNA during mRNA decay. Does not affect nonsense-mediated mRNA decay. Required for normal P-body assembly.</text>
</comment>
<comment type="subunit">
    <text evidence="7">Homodimer. Interacts with DCP2.</text>
</comment>
<comment type="interaction">
    <interactant intactId="EBI-22300">
        <id>P39998</id>
    </interactant>
    <interactant intactId="EBI-38519">
        <id>Q12517</id>
        <label>DCP1</label>
    </interactant>
    <organismsDiffer>false</organismsDiffer>
    <experiments>5</experiments>
</comment>
<comment type="interaction">
    <interactant intactId="EBI-22300">
        <id>P39998</id>
    </interactant>
    <interactant intactId="EBI-270">
        <id>P53550</id>
        <label>DCP2</label>
    </interactant>
    <organismsDiffer>false</organismsDiffer>
    <experiments>7</experiments>
</comment>
<comment type="interaction">
    <interactant intactId="EBI-22300">
        <id>P39998</id>
    </interactant>
    <interactant intactId="EBI-158">
        <id>P39517</id>
        <label>DHH1</label>
    </interactant>
    <organismsDiffer>false</organismsDiffer>
    <experiments>3</experiments>
</comment>
<comment type="subcellular location">
    <subcellularLocation>
        <location evidence="6">Cytoplasm</location>
        <location evidence="6">P-body</location>
    </subcellularLocation>
    <text>Is concentrated in several cytoplasmic foci called P bodies (or cytoplasmic processing bodies) which represent sites of mRNA decapping and 5' to 3' exonucleotidic decay.</text>
</comment>
<comment type="miscellaneous">
    <text evidence="5">Present with 2340 molecules/cell in log phase SD medium.</text>
</comment>
<comment type="similarity">
    <text evidence="8">Belongs to the EDC3 family.</text>
</comment>
<protein>
    <recommendedName>
        <fullName>Enhancer of mRNA-decapping protein 3</fullName>
    </recommendedName>
</protein>
<gene>
    <name type="primary">EDC3</name>
    <name type="synonym">LSM16</name>
    <name type="ordered locus">YEL015W</name>
</gene>
<sequence>MSQFVGFGVQVELKDGKLIQGKIAKATSKGLTLNDVQFGDGGKSQAFKVRASRLKDLKVLTVASQSGKRKQQRQQQQQNDYNQNRGEHIDWQDDDVSKIKQQEDFDFQRNLGMFNKKDVFAQLKQNDDILPENRLQGHNRKQTQLQQNNYQNDELVIPDAKKDSWNKISSRNEQSTHQSQPQQDAQDDLVLEDDEHEYDVDDIDDPKYLPITQSLNITHLIHSATNSPSINDKTKGTVINDKDQVLAKLGQMIISQSRSNSTSLPAANKQTTIRSKNTKQNIPMATPVQLLEMESITSEFFSINSAGLLENFAVNASFFLKQKLGGRARLRLQNSNPEPLVVILASDSNRSGAKALALGRHLCQTGHIRVITLFTCSQNELQDSMVKKQTDIYKKCGGKIVNSVSSLESAMETLNSPVEIVIDAMQGYDCTLSDLAGTSEVIESRIKSMISWCNKQRGSTKVWSLDIPNGFDAGSGMPDIFFSDRIEATGIICSGWPLIAINNLIANLPSLEDAVLIDIGIPQGAYSQRTSLRKFQNCDLFVTDGSLLLDL</sequence>
<keyword id="KW-0002">3D-structure</keyword>
<keyword id="KW-0963">Cytoplasm</keyword>
<keyword id="KW-0597">Phosphoprotein</keyword>
<keyword id="KW-1185">Reference proteome</keyword>
<dbReference type="EMBL" id="U18530">
    <property type="protein sequence ID" value="AAB64492.1"/>
    <property type="molecule type" value="Genomic_DNA"/>
</dbReference>
<dbReference type="EMBL" id="BK006939">
    <property type="protein sequence ID" value="DAA07639.1"/>
    <property type="molecule type" value="Genomic_DNA"/>
</dbReference>
<dbReference type="PIR" id="S50444">
    <property type="entry name" value="S50444"/>
</dbReference>
<dbReference type="RefSeq" id="NP_010901.1">
    <property type="nucleotide sequence ID" value="NM_001178830.1"/>
</dbReference>
<dbReference type="PDB" id="4BRU">
    <property type="method" value="X-ray"/>
    <property type="resolution" value="3.24 A"/>
    <property type="chains" value="B=77-116"/>
</dbReference>
<dbReference type="PDB" id="6Y3Z">
    <property type="method" value="X-ray"/>
    <property type="resolution" value="3.49 A"/>
    <property type="chains" value="C=1-66"/>
</dbReference>
<dbReference type="PDBsum" id="4BRU"/>
<dbReference type="PDBsum" id="6Y3Z"/>
<dbReference type="SMR" id="P39998"/>
<dbReference type="BioGRID" id="36716">
    <property type="interactions" value="110"/>
</dbReference>
<dbReference type="DIP" id="DIP-842N"/>
<dbReference type="FunCoup" id="P39998">
    <property type="interactions" value="214"/>
</dbReference>
<dbReference type="IntAct" id="P39998">
    <property type="interactions" value="24"/>
</dbReference>
<dbReference type="MINT" id="P39998"/>
<dbReference type="STRING" id="4932.YEL015W"/>
<dbReference type="GlyGen" id="P39998">
    <property type="glycosylation" value="1 site, 1 O-linked glycan (1 site)"/>
</dbReference>
<dbReference type="iPTMnet" id="P39998"/>
<dbReference type="PaxDb" id="4932-YEL015W"/>
<dbReference type="PeptideAtlas" id="P39998"/>
<dbReference type="EnsemblFungi" id="YEL015W_mRNA">
    <property type="protein sequence ID" value="YEL015W"/>
    <property type="gene ID" value="YEL015W"/>
</dbReference>
<dbReference type="GeneID" id="856700"/>
<dbReference type="KEGG" id="sce:YEL015W"/>
<dbReference type="AGR" id="SGD:S000000741"/>
<dbReference type="SGD" id="S000000741">
    <property type="gene designation" value="EDC3"/>
</dbReference>
<dbReference type="VEuPathDB" id="FungiDB:YEL015W"/>
<dbReference type="eggNOG" id="KOG2585">
    <property type="taxonomic scope" value="Eukaryota"/>
</dbReference>
<dbReference type="GeneTree" id="ENSGT00390000016435"/>
<dbReference type="HOGENOM" id="CLU_037134_0_0_1"/>
<dbReference type="InParanoid" id="P39998"/>
<dbReference type="OMA" id="AMFDKKS"/>
<dbReference type="OrthoDB" id="10030313at2759"/>
<dbReference type="BioCyc" id="YEAST:G3O-30140-MONOMER"/>
<dbReference type="Reactome" id="R-SCE-430039">
    <property type="pathway name" value="mRNA decay by 5' to 3' exoribonuclease"/>
</dbReference>
<dbReference type="BioGRID-ORCS" id="856700">
    <property type="hits" value="0 hits in 10 CRISPR screens"/>
</dbReference>
<dbReference type="CD-CODE" id="A777E0F8">
    <property type="entry name" value="P-body"/>
</dbReference>
<dbReference type="EvolutionaryTrace" id="P39998"/>
<dbReference type="PRO" id="PR:P39998"/>
<dbReference type="Proteomes" id="UP000002311">
    <property type="component" value="Chromosome V"/>
</dbReference>
<dbReference type="RNAct" id="P39998">
    <property type="molecule type" value="protein"/>
</dbReference>
<dbReference type="GO" id="GO:0005737">
    <property type="term" value="C:cytoplasm"/>
    <property type="evidence" value="ECO:0000314"/>
    <property type="project" value="SGD"/>
</dbReference>
<dbReference type="GO" id="GO:0005634">
    <property type="term" value="C:nucleus"/>
    <property type="evidence" value="ECO:0000314"/>
    <property type="project" value="SGD"/>
</dbReference>
<dbReference type="GO" id="GO:0000932">
    <property type="term" value="C:P-body"/>
    <property type="evidence" value="ECO:0000314"/>
    <property type="project" value="SGD"/>
</dbReference>
<dbReference type="GO" id="GO:0003729">
    <property type="term" value="F:mRNA binding"/>
    <property type="evidence" value="ECO:0000314"/>
    <property type="project" value="SGD"/>
</dbReference>
<dbReference type="GO" id="GO:0042149">
    <property type="term" value="P:cellular response to glucose starvation"/>
    <property type="evidence" value="ECO:0000315"/>
    <property type="project" value="SGD"/>
</dbReference>
<dbReference type="GO" id="GO:0031087">
    <property type="term" value="P:deadenylation-independent decapping of nuclear-transcribed mRNA"/>
    <property type="evidence" value="ECO:0000315"/>
    <property type="project" value="SGD"/>
</dbReference>
<dbReference type="GO" id="GO:0033962">
    <property type="term" value="P:P-body assembly"/>
    <property type="evidence" value="ECO:0000315"/>
    <property type="project" value="SGD"/>
</dbReference>
<dbReference type="GO" id="GO:1900153">
    <property type="term" value="P:positive regulation of nuclear-transcribed mRNA catabolic process, deadenylation-dependent decay"/>
    <property type="evidence" value="ECO:0000315"/>
    <property type="project" value="SGD"/>
</dbReference>
<dbReference type="CDD" id="cd22576">
    <property type="entry name" value="Edc3_Lsm"/>
    <property type="match status" value="1"/>
</dbReference>
<dbReference type="FunFam" id="3.40.50.10260:FF:000010">
    <property type="entry name" value="Edc3p"/>
    <property type="match status" value="1"/>
</dbReference>
<dbReference type="Gene3D" id="2.30.30.100">
    <property type="match status" value="1"/>
</dbReference>
<dbReference type="Gene3D" id="3.40.50.10260">
    <property type="entry name" value="YjeF N-terminal domain"/>
    <property type="match status" value="1"/>
</dbReference>
<dbReference type="InterPro" id="IPR025762">
    <property type="entry name" value="DFDF"/>
</dbReference>
<dbReference type="InterPro" id="IPR019050">
    <property type="entry name" value="FDF_dom"/>
</dbReference>
<dbReference type="InterPro" id="IPR047575">
    <property type="entry name" value="Sm"/>
</dbReference>
<dbReference type="InterPro" id="IPR004443">
    <property type="entry name" value="YjeF_N_dom"/>
</dbReference>
<dbReference type="InterPro" id="IPR036652">
    <property type="entry name" value="YjeF_N_dom_sf"/>
</dbReference>
<dbReference type="PANTHER" id="PTHR13612">
    <property type="entry name" value="ENHANCER OF MRNA-DECAPPING PROTEIN 3"/>
    <property type="match status" value="1"/>
</dbReference>
<dbReference type="PANTHER" id="PTHR13612:SF0">
    <property type="entry name" value="ENHANCER OF MRNA-DECAPPING PROTEIN 3"/>
    <property type="match status" value="1"/>
</dbReference>
<dbReference type="Pfam" id="PF09532">
    <property type="entry name" value="FDF"/>
    <property type="match status" value="1"/>
</dbReference>
<dbReference type="Pfam" id="PF03853">
    <property type="entry name" value="YjeF_N"/>
    <property type="match status" value="1"/>
</dbReference>
<dbReference type="SMART" id="SM01199">
    <property type="entry name" value="FDF"/>
    <property type="match status" value="1"/>
</dbReference>
<dbReference type="SUPFAM" id="SSF64153">
    <property type="entry name" value="YjeF N-terminal domain-like"/>
    <property type="match status" value="1"/>
</dbReference>
<dbReference type="PROSITE" id="PS51512">
    <property type="entry name" value="DFDF"/>
    <property type="match status" value="1"/>
</dbReference>
<dbReference type="PROSITE" id="PS52002">
    <property type="entry name" value="SM"/>
    <property type="match status" value="1"/>
</dbReference>
<dbReference type="PROSITE" id="PS51385">
    <property type="entry name" value="YJEF_N"/>
    <property type="match status" value="1"/>
</dbReference>
<name>EDC3_YEAST</name>